<reference key="1">
    <citation type="journal article" date="2006" name="Appl. Environ. Microbiol.">
        <title>Genome sequence of the chemolithoautotrophic nitrite-oxidizing bacterium Nitrobacter winogradskyi Nb-255.</title>
        <authorList>
            <person name="Starkenburg S.R."/>
            <person name="Chain P.S.G."/>
            <person name="Sayavedra-Soto L.A."/>
            <person name="Hauser L."/>
            <person name="Land M.L."/>
            <person name="Larimer F.W."/>
            <person name="Malfatti S.A."/>
            <person name="Klotz M.G."/>
            <person name="Bottomley P.J."/>
            <person name="Arp D.J."/>
            <person name="Hickey W.J."/>
        </authorList>
    </citation>
    <scope>NUCLEOTIDE SEQUENCE [LARGE SCALE GENOMIC DNA]</scope>
    <source>
        <strain>ATCC 25391 / DSM 10237 / CIP 104748 / NCIMB 11846 / Nb-255</strain>
    </source>
</reference>
<protein>
    <recommendedName>
        <fullName evidence="1">tRNA uridine 5-carboxymethylaminomethyl modification enzyme MnmG</fullName>
    </recommendedName>
    <alternativeName>
        <fullName evidence="1">Glucose-inhibited division protein A</fullName>
    </alternativeName>
</protein>
<keyword id="KW-0963">Cytoplasm</keyword>
<keyword id="KW-0274">FAD</keyword>
<keyword id="KW-0285">Flavoprotein</keyword>
<keyword id="KW-0520">NAD</keyword>
<keyword id="KW-1185">Reference proteome</keyword>
<keyword id="KW-0819">tRNA processing</keyword>
<sequence length="623" mass="66650">MTASFDVIVIGGGHAGCEAAAASARTGARTALVTHRFATIGAMSCNPAIGGLGKGHLVREVDALDGLMARIADAGGIQFRMLNRRKGPAVRGPRAQEDRKLYAAAMQAAIRETANLEVIDGEADDLIVSGGRIAGVRLTDGRRIKSAAVVVTTGTFLRGLIHLGEKSWPAGRVDEAPALGLSASFERIGFALGRLKTGTPPRLDGTTIDWAAVEMQPGDDPPEPFSVLTARITTPQIQCGITRTTPATHDLIRTNVHRSPIYSGQITSSGPRYCPSIEDKVVRFGDRDGHQVFLEPEGLDDATVYPNGISTSLPEEVQLAILATIPGLENVKMTRPGYAIEYDHVDPRELEPTLQTRRMRGLFLAGQINGTTGYEEAAAQGLVAGLNAALAAGGGDPVVFDRADGYLGVMIDDLVTRGITEPYRMFTSRAEYRLTLRADNADQRLTDRGIALGCVGAGRAAYHRAKMAALQAAKQGAMSLSVTPNEAARHGLSLNRDGHRRSAFELLSYPEIGWREVAAIWPELSAIDPAIAEHLEIDAKYDVYLKRQAADVEAFRRDEGLVLTEIDYSAVPGLSNEARNRLEKAQPLTVGQAGRLDGITPAALGILAAYLRREARQRTAASA</sequence>
<dbReference type="EMBL" id="CP000115">
    <property type="protein sequence ID" value="ABA03365.1"/>
    <property type="molecule type" value="Genomic_DNA"/>
</dbReference>
<dbReference type="RefSeq" id="WP_011313434.1">
    <property type="nucleotide sequence ID" value="NC_007406.1"/>
</dbReference>
<dbReference type="SMR" id="Q3SWH6"/>
<dbReference type="STRING" id="323098.Nwi_0097"/>
<dbReference type="KEGG" id="nwi:Nwi_0097"/>
<dbReference type="eggNOG" id="COG0445">
    <property type="taxonomic scope" value="Bacteria"/>
</dbReference>
<dbReference type="HOGENOM" id="CLU_007831_2_2_5"/>
<dbReference type="OrthoDB" id="9815560at2"/>
<dbReference type="Proteomes" id="UP000002531">
    <property type="component" value="Chromosome"/>
</dbReference>
<dbReference type="GO" id="GO:0005829">
    <property type="term" value="C:cytosol"/>
    <property type="evidence" value="ECO:0007669"/>
    <property type="project" value="TreeGrafter"/>
</dbReference>
<dbReference type="GO" id="GO:0050660">
    <property type="term" value="F:flavin adenine dinucleotide binding"/>
    <property type="evidence" value="ECO:0007669"/>
    <property type="project" value="UniProtKB-UniRule"/>
</dbReference>
<dbReference type="GO" id="GO:0030488">
    <property type="term" value="P:tRNA methylation"/>
    <property type="evidence" value="ECO:0007669"/>
    <property type="project" value="TreeGrafter"/>
</dbReference>
<dbReference type="GO" id="GO:0002098">
    <property type="term" value="P:tRNA wobble uridine modification"/>
    <property type="evidence" value="ECO:0007669"/>
    <property type="project" value="InterPro"/>
</dbReference>
<dbReference type="FunFam" id="3.50.50.60:FF:000145">
    <property type="entry name" value="tRNA uridine 5-carboxymethylaminomethyl modification enzyme"/>
    <property type="match status" value="1"/>
</dbReference>
<dbReference type="FunFam" id="1.10.150.570:FF:000001">
    <property type="entry name" value="tRNA uridine 5-carboxymethylaminomethyl modification enzyme MnmG"/>
    <property type="match status" value="1"/>
</dbReference>
<dbReference type="FunFam" id="3.50.50.60:FF:000002">
    <property type="entry name" value="tRNA uridine 5-carboxymethylaminomethyl modification enzyme MnmG"/>
    <property type="match status" value="1"/>
</dbReference>
<dbReference type="Gene3D" id="3.50.50.60">
    <property type="entry name" value="FAD/NAD(P)-binding domain"/>
    <property type="match status" value="2"/>
</dbReference>
<dbReference type="Gene3D" id="1.10.150.570">
    <property type="entry name" value="GidA associated domain, C-terminal subdomain"/>
    <property type="match status" value="1"/>
</dbReference>
<dbReference type="Gene3D" id="1.10.10.1800">
    <property type="entry name" value="tRNA uridine 5-carboxymethylaminomethyl modification enzyme MnmG/GidA"/>
    <property type="match status" value="1"/>
</dbReference>
<dbReference type="HAMAP" id="MF_00129">
    <property type="entry name" value="MnmG_GidA"/>
    <property type="match status" value="1"/>
</dbReference>
<dbReference type="InterPro" id="IPR036188">
    <property type="entry name" value="FAD/NAD-bd_sf"/>
</dbReference>
<dbReference type="InterPro" id="IPR049312">
    <property type="entry name" value="GIDA_C_N"/>
</dbReference>
<dbReference type="InterPro" id="IPR004416">
    <property type="entry name" value="MnmG"/>
</dbReference>
<dbReference type="InterPro" id="IPR002218">
    <property type="entry name" value="MnmG-rel"/>
</dbReference>
<dbReference type="InterPro" id="IPR020595">
    <property type="entry name" value="MnmG-rel_CS"/>
</dbReference>
<dbReference type="InterPro" id="IPR026904">
    <property type="entry name" value="MnmG_C"/>
</dbReference>
<dbReference type="InterPro" id="IPR047001">
    <property type="entry name" value="MnmG_C_subdom"/>
</dbReference>
<dbReference type="InterPro" id="IPR044920">
    <property type="entry name" value="MnmG_C_subdom_sf"/>
</dbReference>
<dbReference type="InterPro" id="IPR040131">
    <property type="entry name" value="MnmG_N"/>
</dbReference>
<dbReference type="NCBIfam" id="TIGR00136">
    <property type="entry name" value="mnmG_gidA"/>
    <property type="match status" value="1"/>
</dbReference>
<dbReference type="PANTHER" id="PTHR11806">
    <property type="entry name" value="GLUCOSE INHIBITED DIVISION PROTEIN A"/>
    <property type="match status" value="1"/>
</dbReference>
<dbReference type="PANTHER" id="PTHR11806:SF0">
    <property type="entry name" value="PROTEIN MTO1 HOMOLOG, MITOCHONDRIAL"/>
    <property type="match status" value="1"/>
</dbReference>
<dbReference type="Pfam" id="PF01134">
    <property type="entry name" value="GIDA"/>
    <property type="match status" value="1"/>
</dbReference>
<dbReference type="Pfam" id="PF21680">
    <property type="entry name" value="GIDA_C_1st"/>
    <property type="match status" value="1"/>
</dbReference>
<dbReference type="Pfam" id="PF13932">
    <property type="entry name" value="SAM_GIDA_C"/>
    <property type="match status" value="1"/>
</dbReference>
<dbReference type="PRINTS" id="PR00411">
    <property type="entry name" value="PNDRDTASEI"/>
</dbReference>
<dbReference type="SMART" id="SM01228">
    <property type="entry name" value="GIDA_assoc_3"/>
    <property type="match status" value="1"/>
</dbReference>
<dbReference type="SUPFAM" id="SSF51905">
    <property type="entry name" value="FAD/NAD(P)-binding domain"/>
    <property type="match status" value="1"/>
</dbReference>
<dbReference type="PROSITE" id="PS01280">
    <property type="entry name" value="GIDA_1"/>
    <property type="match status" value="1"/>
</dbReference>
<dbReference type="PROSITE" id="PS01281">
    <property type="entry name" value="GIDA_2"/>
    <property type="match status" value="1"/>
</dbReference>
<organism>
    <name type="scientific">Nitrobacter winogradskyi (strain ATCC 25391 / DSM 10237 / CIP 104748 / NCIMB 11846 / Nb-255)</name>
    <dbReference type="NCBI Taxonomy" id="323098"/>
    <lineage>
        <taxon>Bacteria</taxon>
        <taxon>Pseudomonadati</taxon>
        <taxon>Pseudomonadota</taxon>
        <taxon>Alphaproteobacteria</taxon>
        <taxon>Hyphomicrobiales</taxon>
        <taxon>Nitrobacteraceae</taxon>
        <taxon>Nitrobacter</taxon>
    </lineage>
</organism>
<name>MNMG_NITWN</name>
<accession>Q3SWH6</accession>
<evidence type="ECO:0000255" key="1">
    <source>
        <dbReference type="HAMAP-Rule" id="MF_00129"/>
    </source>
</evidence>
<comment type="function">
    <text evidence="1">NAD-binding protein involved in the addition of a carboxymethylaminomethyl (cmnm) group at the wobble position (U34) of certain tRNAs, forming tRNA-cmnm(5)s(2)U34.</text>
</comment>
<comment type="cofactor">
    <cofactor evidence="1">
        <name>FAD</name>
        <dbReference type="ChEBI" id="CHEBI:57692"/>
    </cofactor>
</comment>
<comment type="subunit">
    <text evidence="1">Homodimer. Heterotetramer of two MnmE and two MnmG subunits.</text>
</comment>
<comment type="subcellular location">
    <subcellularLocation>
        <location evidence="1">Cytoplasm</location>
    </subcellularLocation>
</comment>
<comment type="similarity">
    <text evidence="1">Belongs to the MnmG family.</text>
</comment>
<feature type="chain" id="PRO_1000016629" description="tRNA uridine 5-carboxymethylaminomethyl modification enzyme MnmG">
    <location>
        <begin position="1"/>
        <end position="623"/>
    </location>
</feature>
<feature type="binding site" evidence="1">
    <location>
        <begin position="11"/>
        <end position="16"/>
    </location>
    <ligand>
        <name>FAD</name>
        <dbReference type="ChEBI" id="CHEBI:57692"/>
    </ligand>
</feature>
<feature type="binding site" evidence="1">
    <location>
        <begin position="270"/>
        <end position="284"/>
    </location>
    <ligand>
        <name>NAD(+)</name>
        <dbReference type="ChEBI" id="CHEBI:57540"/>
    </ligand>
</feature>
<gene>
    <name evidence="1" type="primary">mnmG</name>
    <name evidence="1" type="synonym">gidA</name>
    <name type="ordered locus">Nwi_0097</name>
</gene>
<proteinExistence type="inferred from homology"/>